<dbReference type="EC" id="3.6.5.-" evidence="1"/>
<dbReference type="EMBL" id="CU469464">
    <property type="protein sequence ID" value="CAP18468.1"/>
    <property type="molecule type" value="Genomic_DNA"/>
</dbReference>
<dbReference type="SMR" id="B3QZT1"/>
<dbReference type="STRING" id="37692.ATP_00281"/>
<dbReference type="KEGG" id="pml:ATP_00281"/>
<dbReference type="eggNOG" id="COG0536">
    <property type="taxonomic scope" value="Bacteria"/>
</dbReference>
<dbReference type="HOGENOM" id="CLU_011747_2_1_14"/>
<dbReference type="Proteomes" id="UP000002020">
    <property type="component" value="Chromosome"/>
</dbReference>
<dbReference type="GO" id="GO:0005737">
    <property type="term" value="C:cytoplasm"/>
    <property type="evidence" value="ECO:0007669"/>
    <property type="project" value="UniProtKB-SubCell"/>
</dbReference>
<dbReference type="GO" id="GO:0005525">
    <property type="term" value="F:GTP binding"/>
    <property type="evidence" value="ECO:0007669"/>
    <property type="project" value="UniProtKB-UniRule"/>
</dbReference>
<dbReference type="GO" id="GO:0003924">
    <property type="term" value="F:GTPase activity"/>
    <property type="evidence" value="ECO:0007669"/>
    <property type="project" value="UniProtKB-UniRule"/>
</dbReference>
<dbReference type="GO" id="GO:0000287">
    <property type="term" value="F:magnesium ion binding"/>
    <property type="evidence" value="ECO:0007669"/>
    <property type="project" value="InterPro"/>
</dbReference>
<dbReference type="GO" id="GO:0042254">
    <property type="term" value="P:ribosome biogenesis"/>
    <property type="evidence" value="ECO:0007669"/>
    <property type="project" value="UniProtKB-UniRule"/>
</dbReference>
<dbReference type="CDD" id="cd01898">
    <property type="entry name" value="Obg"/>
    <property type="match status" value="1"/>
</dbReference>
<dbReference type="FunFam" id="2.70.210.12:FF:000001">
    <property type="entry name" value="GTPase Obg"/>
    <property type="match status" value="1"/>
</dbReference>
<dbReference type="Gene3D" id="3.30.300.350">
    <property type="entry name" value="GTP-binding protein OBG, C-terminal domain"/>
    <property type="match status" value="1"/>
</dbReference>
<dbReference type="Gene3D" id="2.70.210.12">
    <property type="entry name" value="GTP1/OBG domain"/>
    <property type="match status" value="1"/>
</dbReference>
<dbReference type="Gene3D" id="3.40.50.300">
    <property type="entry name" value="P-loop containing nucleotide triphosphate hydrolases"/>
    <property type="match status" value="1"/>
</dbReference>
<dbReference type="HAMAP" id="MF_01454">
    <property type="entry name" value="GTPase_Obg"/>
    <property type="match status" value="1"/>
</dbReference>
<dbReference type="InterPro" id="IPR031167">
    <property type="entry name" value="G_OBG"/>
</dbReference>
<dbReference type="InterPro" id="IPR006073">
    <property type="entry name" value="GTP-bd"/>
</dbReference>
<dbReference type="InterPro" id="IPR014100">
    <property type="entry name" value="GTP-bd_Obg/CgtA"/>
</dbReference>
<dbReference type="InterPro" id="IPR036346">
    <property type="entry name" value="GTP-bd_prot_GTP1/OBG_C_sf"/>
</dbReference>
<dbReference type="InterPro" id="IPR006074">
    <property type="entry name" value="GTP1-OBG_CS"/>
</dbReference>
<dbReference type="InterPro" id="IPR006169">
    <property type="entry name" value="GTP1_OBG_dom"/>
</dbReference>
<dbReference type="InterPro" id="IPR036726">
    <property type="entry name" value="GTP1_OBG_dom_sf"/>
</dbReference>
<dbReference type="InterPro" id="IPR045086">
    <property type="entry name" value="OBG_GTPase"/>
</dbReference>
<dbReference type="InterPro" id="IPR015349">
    <property type="entry name" value="OCT_dom"/>
</dbReference>
<dbReference type="InterPro" id="IPR027417">
    <property type="entry name" value="P-loop_NTPase"/>
</dbReference>
<dbReference type="InterPro" id="IPR005225">
    <property type="entry name" value="Small_GTP-bd"/>
</dbReference>
<dbReference type="NCBIfam" id="TIGR02729">
    <property type="entry name" value="Obg_CgtA"/>
    <property type="match status" value="1"/>
</dbReference>
<dbReference type="NCBIfam" id="TIGR03595">
    <property type="entry name" value="Obg_CgtA_exten"/>
    <property type="match status" value="1"/>
</dbReference>
<dbReference type="NCBIfam" id="NF008954">
    <property type="entry name" value="PRK12296.1"/>
    <property type="match status" value="1"/>
</dbReference>
<dbReference type="NCBIfam" id="NF008955">
    <property type="entry name" value="PRK12297.1"/>
    <property type="match status" value="1"/>
</dbReference>
<dbReference type="NCBIfam" id="NF008956">
    <property type="entry name" value="PRK12299.1"/>
    <property type="match status" value="1"/>
</dbReference>
<dbReference type="NCBIfam" id="TIGR00231">
    <property type="entry name" value="small_GTP"/>
    <property type="match status" value="1"/>
</dbReference>
<dbReference type="PANTHER" id="PTHR11702">
    <property type="entry name" value="DEVELOPMENTALLY REGULATED GTP-BINDING PROTEIN-RELATED"/>
    <property type="match status" value="1"/>
</dbReference>
<dbReference type="PANTHER" id="PTHR11702:SF31">
    <property type="entry name" value="MITOCHONDRIAL RIBOSOME-ASSOCIATED GTPASE 2"/>
    <property type="match status" value="1"/>
</dbReference>
<dbReference type="Pfam" id="PF09269">
    <property type="entry name" value="DUF1967"/>
    <property type="match status" value="1"/>
</dbReference>
<dbReference type="Pfam" id="PF01018">
    <property type="entry name" value="GTP1_OBG"/>
    <property type="match status" value="1"/>
</dbReference>
<dbReference type="Pfam" id="PF01926">
    <property type="entry name" value="MMR_HSR1"/>
    <property type="match status" value="1"/>
</dbReference>
<dbReference type="PIRSF" id="PIRSF002401">
    <property type="entry name" value="GTP_bd_Obg/CgtA"/>
    <property type="match status" value="1"/>
</dbReference>
<dbReference type="PRINTS" id="PR00326">
    <property type="entry name" value="GTP1OBG"/>
</dbReference>
<dbReference type="SUPFAM" id="SSF102741">
    <property type="entry name" value="Obg GTP-binding protein C-terminal domain"/>
    <property type="match status" value="1"/>
</dbReference>
<dbReference type="SUPFAM" id="SSF82051">
    <property type="entry name" value="Obg GTP-binding protein N-terminal domain"/>
    <property type="match status" value="1"/>
</dbReference>
<dbReference type="SUPFAM" id="SSF52540">
    <property type="entry name" value="P-loop containing nucleoside triphosphate hydrolases"/>
    <property type="match status" value="1"/>
</dbReference>
<dbReference type="PROSITE" id="PS51710">
    <property type="entry name" value="G_OBG"/>
    <property type="match status" value="1"/>
</dbReference>
<dbReference type="PROSITE" id="PS00905">
    <property type="entry name" value="GTP1_OBG"/>
    <property type="match status" value="1"/>
</dbReference>
<dbReference type="PROSITE" id="PS51883">
    <property type="entry name" value="OBG"/>
    <property type="match status" value="1"/>
</dbReference>
<dbReference type="PROSITE" id="PS51881">
    <property type="entry name" value="OCT"/>
    <property type="match status" value="1"/>
</dbReference>
<feature type="chain" id="PRO_0000386124" description="GTPase Obg">
    <location>
        <begin position="1"/>
        <end position="421"/>
    </location>
</feature>
<feature type="domain" description="Obg" evidence="3">
    <location>
        <begin position="1"/>
        <end position="158"/>
    </location>
</feature>
<feature type="domain" description="OBG-type G" evidence="1">
    <location>
        <begin position="159"/>
        <end position="324"/>
    </location>
</feature>
<feature type="domain" description="OCT" evidence="2">
    <location>
        <begin position="342"/>
        <end position="421"/>
    </location>
</feature>
<feature type="binding site" evidence="1">
    <location>
        <begin position="165"/>
        <end position="172"/>
    </location>
    <ligand>
        <name>GTP</name>
        <dbReference type="ChEBI" id="CHEBI:37565"/>
    </ligand>
</feature>
<feature type="binding site" evidence="1">
    <location>
        <position position="172"/>
    </location>
    <ligand>
        <name>Mg(2+)</name>
        <dbReference type="ChEBI" id="CHEBI:18420"/>
    </ligand>
</feature>
<feature type="binding site" evidence="1">
    <location>
        <begin position="190"/>
        <end position="194"/>
    </location>
    <ligand>
        <name>GTP</name>
        <dbReference type="ChEBI" id="CHEBI:37565"/>
    </ligand>
</feature>
<feature type="binding site" evidence="1">
    <location>
        <position position="192"/>
    </location>
    <ligand>
        <name>Mg(2+)</name>
        <dbReference type="ChEBI" id="CHEBI:18420"/>
    </ligand>
</feature>
<feature type="binding site" evidence="1">
    <location>
        <begin position="211"/>
        <end position="214"/>
    </location>
    <ligand>
        <name>GTP</name>
        <dbReference type="ChEBI" id="CHEBI:37565"/>
    </ligand>
</feature>
<feature type="binding site" evidence="1">
    <location>
        <begin position="278"/>
        <end position="281"/>
    </location>
    <ligand>
        <name>GTP</name>
        <dbReference type="ChEBI" id="CHEBI:37565"/>
    </ligand>
</feature>
<feature type="binding site" evidence="1">
    <location>
        <begin position="305"/>
        <end position="307"/>
    </location>
    <ligand>
        <name>GTP</name>
        <dbReference type="ChEBI" id="CHEBI:37565"/>
    </ligand>
</feature>
<name>OBG_PHYMT</name>
<proteinExistence type="inferred from homology"/>
<accession>B3QZT1</accession>
<organism>
    <name type="scientific">Phytoplasma mali (strain AT)</name>
    <dbReference type="NCBI Taxonomy" id="482235"/>
    <lineage>
        <taxon>Bacteria</taxon>
        <taxon>Bacillati</taxon>
        <taxon>Mycoplasmatota</taxon>
        <taxon>Mollicutes</taxon>
        <taxon>Acholeplasmatales</taxon>
        <taxon>Acholeplasmataceae</taxon>
        <taxon>Candidatus Phytoplasma</taxon>
        <taxon>16SrX (Apple proliferation group)</taxon>
    </lineage>
</organism>
<evidence type="ECO:0000255" key="1">
    <source>
        <dbReference type="HAMAP-Rule" id="MF_01454"/>
    </source>
</evidence>
<evidence type="ECO:0000255" key="2">
    <source>
        <dbReference type="PROSITE-ProRule" id="PRU01229"/>
    </source>
</evidence>
<evidence type="ECO:0000255" key="3">
    <source>
        <dbReference type="PROSITE-ProRule" id="PRU01231"/>
    </source>
</evidence>
<protein>
    <recommendedName>
        <fullName evidence="1">GTPase Obg</fullName>
        <ecNumber evidence="1">3.6.5.-</ecNumber>
    </recommendedName>
    <alternativeName>
        <fullName evidence="1">GTP-binding protein Obg</fullName>
    </alternativeName>
</protein>
<keyword id="KW-0963">Cytoplasm</keyword>
<keyword id="KW-0342">GTP-binding</keyword>
<keyword id="KW-0378">Hydrolase</keyword>
<keyword id="KW-0460">Magnesium</keyword>
<keyword id="KW-0479">Metal-binding</keyword>
<keyword id="KW-0547">Nucleotide-binding</keyword>
<keyword id="KW-1185">Reference proteome</keyword>
<comment type="function">
    <text evidence="1">An essential GTPase which binds GTP, GDP and possibly (p)ppGpp with moderate affinity, with high nucleotide exchange rates and a fairly low GTP hydrolysis rate. Plays a role in control of the cell cycle, stress response, ribosome biogenesis and in those bacteria that undergo differentiation, in morphogenesis control.</text>
</comment>
<comment type="cofactor">
    <cofactor evidence="1">
        <name>Mg(2+)</name>
        <dbReference type="ChEBI" id="CHEBI:18420"/>
    </cofactor>
</comment>
<comment type="subunit">
    <text evidence="1">Monomer.</text>
</comment>
<comment type="subcellular location">
    <subcellularLocation>
        <location evidence="1">Cytoplasm</location>
    </subcellularLocation>
</comment>
<comment type="similarity">
    <text evidence="1">Belongs to the TRAFAC class OBG-HflX-like GTPase superfamily. OBG GTPase family.</text>
</comment>
<reference key="1">
    <citation type="journal article" date="2008" name="BMC Genomics">
        <title>The linear chromosome of the plant-pathogenic mycoplasma 'Candidatus Phytoplasma mali'.</title>
        <authorList>
            <person name="Kube M."/>
            <person name="Schneider B."/>
            <person name="Kuhl H."/>
            <person name="Dandekar T."/>
            <person name="Heitmann K."/>
            <person name="Migdoll A.M."/>
            <person name="Reinhardt R."/>
            <person name="Seemueller E."/>
        </authorList>
    </citation>
    <scope>NUCLEOTIDE SEQUENCE [LARGE SCALE GENOMIC DNA]</scope>
    <source>
        <strain>AT</strain>
    </source>
</reference>
<sequence>MYFIDEAINEIKAGNGGNGVVSFRKEKYVPLGGPDGGNGGKGGSIFFIGEQSENNLLKLKYQKHLKAKNGENGKNKNKHGANAENIYIKVPLGTIIYNLQNEITGEILKHGEILTIAKGGRGGKGNKSLATFKNPVPKYAEKGGIGESFKIKTELKILADVGLIGYPSVGKSTLISIISDAKPKIADYPFTTLKPYLGMVYVDNESFIVADLPGLIPNAHLGKGMGIKFLKHIERCRILIHMCDMSKSNPLQDIENLNQELKIYNKNLLKKPQIIIANKMDIIGAKTKLIELQKKILNKNIIPTSLLKNQNLKILKYKMLEMIKKNVVNLPLCENSSFKTYTLEEEKPDFVIKKDNQGFFVVKGEKIEKFFYKTDFNNEEATKKFAIFLKKIGVEEELIKKGVYFSKNKIKICDRVFEFIT</sequence>
<gene>
    <name evidence="1" type="primary">obg</name>
    <name type="ordered locus">ATP_00281</name>
</gene>